<sequence>MYGRSNAPGCQPPVRAHPPSSPMTSRLQLAAMEQNASDAALSGMQQARSRQASPKRLRDLIPSSDVESMSLNALDDAYGHHDFSVWFEDLMPPEMELLMPTTDAKLNYLSFTRRLASSVFHSPDNRMPGGACDHTSALDARKERFATIINKFLDLHQILHDA</sequence>
<keyword id="KW-1048">Host nucleus</keyword>
<keyword id="KW-1185">Reference proteome</keyword>
<keyword id="KW-0231">Viral genome packaging</keyword>
<keyword id="KW-1188">Viral release from host cell</keyword>
<gene>
    <name evidence="1" type="primary">TRM2</name>
    <name type="ordered locus">27</name>
</gene>
<feature type="chain" id="PRO_0000116024" description="Tripartite terminase subunit 2">
    <location>
        <begin position="1"/>
        <end position="162"/>
    </location>
</feature>
<feature type="region of interest" description="Disordered" evidence="2">
    <location>
        <begin position="1"/>
        <end position="58"/>
    </location>
</feature>
<feature type="compositionally biased region" description="Polar residues" evidence="2">
    <location>
        <begin position="43"/>
        <end position="52"/>
    </location>
</feature>
<name>TRM2_EHV1B</name>
<organism>
    <name type="scientific">Equine herpesvirus 1 (strain Ab4p)</name>
    <name type="common">EHV-1</name>
    <name type="synonym">Equine abortion virus</name>
    <dbReference type="NCBI Taxonomy" id="31520"/>
    <lineage>
        <taxon>Viruses</taxon>
        <taxon>Duplodnaviria</taxon>
        <taxon>Heunggongvirae</taxon>
        <taxon>Peploviricota</taxon>
        <taxon>Herviviricetes</taxon>
        <taxon>Herpesvirales</taxon>
        <taxon>Orthoherpesviridae</taxon>
        <taxon>Alphaherpesvirinae</taxon>
        <taxon>Varicellovirus</taxon>
        <taxon>Varicellovirus equidalpha1</taxon>
        <taxon>Equid alphaherpesvirus 1</taxon>
    </lineage>
</organism>
<dbReference type="EMBL" id="AY665713">
    <property type="protein sequence ID" value="AAT67284.1"/>
    <property type="molecule type" value="Genomic_DNA"/>
</dbReference>
<dbReference type="PIR" id="A36798">
    <property type="entry name" value="WZBEB9"/>
</dbReference>
<dbReference type="SMR" id="P28953"/>
<dbReference type="Proteomes" id="UP000001189">
    <property type="component" value="Segment"/>
</dbReference>
<dbReference type="GO" id="GO:0042025">
    <property type="term" value="C:host cell nucleus"/>
    <property type="evidence" value="ECO:0007669"/>
    <property type="project" value="UniProtKB-SubCell"/>
</dbReference>
<dbReference type="GO" id="GO:0019073">
    <property type="term" value="P:viral DNA genome packaging"/>
    <property type="evidence" value="ECO:0007669"/>
    <property type="project" value="InterPro"/>
</dbReference>
<dbReference type="HAMAP" id="MF_04015">
    <property type="entry name" value="HSV_TRM2"/>
    <property type="match status" value="1"/>
</dbReference>
<dbReference type="InterPro" id="IPR005208">
    <property type="entry name" value="Herpes_TT2"/>
</dbReference>
<dbReference type="Pfam" id="PF03581">
    <property type="entry name" value="Herpes_UL33"/>
    <property type="match status" value="1"/>
</dbReference>
<protein>
    <recommendedName>
        <fullName evidence="1">Tripartite terminase subunit 2</fullName>
    </recommendedName>
</protein>
<evidence type="ECO:0000255" key="1">
    <source>
        <dbReference type="HAMAP-Rule" id="MF_04015"/>
    </source>
</evidence>
<evidence type="ECO:0000256" key="2">
    <source>
        <dbReference type="SAM" id="MobiDB-lite"/>
    </source>
</evidence>
<reference key="1">
    <citation type="journal article" date="1992" name="Virology">
        <title>The DNA sequence of equine herpesvirus-1.</title>
        <authorList>
            <person name="Telford E.A.R."/>
            <person name="Watson M.S."/>
            <person name="McBride K."/>
            <person name="Davison A.J."/>
        </authorList>
    </citation>
    <scope>NUCLEOTIDE SEQUENCE [LARGE SCALE GENOMIC DNA]</scope>
</reference>
<accession>P28953</accession>
<accession>Q6DLI4</accession>
<organismHost>
    <name type="scientific">Equus caballus</name>
    <name type="common">Horse</name>
    <dbReference type="NCBI Taxonomy" id="9796"/>
</organismHost>
<proteinExistence type="inferred from homology"/>
<comment type="function">
    <text evidence="1">Component of the molecular motor that translocates viral genomic DNA in empty capsid during DNA packaging. Forms a tripartite terminase complex together with TRM1 and TRM3 in the host cytoplasm. Once the complex reaches the host nucleus, it interacts with the capsid portal vertex. This portal forms a ring in which genomic DNA is translocated into the capsid.</text>
</comment>
<comment type="subunit">
    <text evidence="1">Associates with TRM1 and TRM3 to form the tripartite terminase complex.</text>
</comment>
<comment type="subcellular location">
    <subcellularLocation>
        <location evidence="1">Host nucleus</location>
    </subcellularLocation>
    <text evidence="1">Found associated with the external surface of the viral capsid during assembly and DNA packaging, but seems absent in extracellular mature virions.</text>
</comment>
<comment type="similarity">
    <text evidence="1">Belongs to the herpesviridae TRM2 protein family.</text>
</comment>